<accession>Q98Q55</accession>
<feature type="chain" id="PRO_0000094291" description="Elongation factor P">
    <location>
        <begin position="1"/>
        <end position="187"/>
    </location>
</feature>
<proteinExistence type="inferred from homology"/>
<dbReference type="EMBL" id="AL445564">
    <property type="protein sequence ID" value="CAC13686.1"/>
    <property type="molecule type" value="Genomic_DNA"/>
</dbReference>
<dbReference type="PIR" id="A90576">
    <property type="entry name" value="A90576"/>
</dbReference>
<dbReference type="RefSeq" id="WP_010925314.1">
    <property type="nucleotide sequence ID" value="NC_002771.1"/>
</dbReference>
<dbReference type="SMR" id="Q98Q55"/>
<dbReference type="STRING" id="272635.gene:17577115"/>
<dbReference type="KEGG" id="mpu:MYPU_5130"/>
<dbReference type="eggNOG" id="COG0231">
    <property type="taxonomic scope" value="Bacteria"/>
</dbReference>
<dbReference type="HOGENOM" id="CLU_074944_2_1_14"/>
<dbReference type="BioCyc" id="MPUL272635:G1GT6-519-MONOMER"/>
<dbReference type="UniPathway" id="UPA00345"/>
<dbReference type="Proteomes" id="UP000000528">
    <property type="component" value="Chromosome"/>
</dbReference>
<dbReference type="GO" id="GO:0005737">
    <property type="term" value="C:cytoplasm"/>
    <property type="evidence" value="ECO:0007669"/>
    <property type="project" value="UniProtKB-SubCell"/>
</dbReference>
<dbReference type="GO" id="GO:0003746">
    <property type="term" value="F:translation elongation factor activity"/>
    <property type="evidence" value="ECO:0007669"/>
    <property type="project" value="UniProtKB-UniRule"/>
</dbReference>
<dbReference type="GO" id="GO:0043043">
    <property type="term" value="P:peptide biosynthetic process"/>
    <property type="evidence" value="ECO:0007669"/>
    <property type="project" value="InterPro"/>
</dbReference>
<dbReference type="CDD" id="cd04470">
    <property type="entry name" value="S1_EF-P_repeat_1"/>
    <property type="match status" value="1"/>
</dbReference>
<dbReference type="CDD" id="cd05794">
    <property type="entry name" value="S1_EF-P_repeat_2"/>
    <property type="match status" value="1"/>
</dbReference>
<dbReference type="FunFam" id="2.30.30.30:FF:000003">
    <property type="entry name" value="Elongation factor P"/>
    <property type="match status" value="1"/>
</dbReference>
<dbReference type="FunFam" id="2.40.50.140:FF:000004">
    <property type="entry name" value="Elongation factor P"/>
    <property type="match status" value="1"/>
</dbReference>
<dbReference type="FunFam" id="2.40.50.140:FF:000009">
    <property type="entry name" value="Elongation factor P"/>
    <property type="match status" value="1"/>
</dbReference>
<dbReference type="Gene3D" id="2.30.30.30">
    <property type="match status" value="1"/>
</dbReference>
<dbReference type="Gene3D" id="2.40.50.140">
    <property type="entry name" value="Nucleic acid-binding proteins"/>
    <property type="match status" value="2"/>
</dbReference>
<dbReference type="HAMAP" id="MF_00141">
    <property type="entry name" value="EF_P"/>
    <property type="match status" value="1"/>
</dbReference>
<dbReference type="InterPro" id="IPR015365">
    <property type="entry name" value="Elong-fact-P_C"/>
</dbReference>
<dbReference type="InterPro" id="IPR012340">
    <property type="entry name" value="NA-bd_OB-fold"/>
</dbReference>
<dbReference type="InterPro" id="IPR014722">
    <property type="entry name" value="Rib_uL2_dom2"/>
</dbReference>
<dbReference type="InterPro" id="IPR020599">
    <property type="entry name" value="Transl_elong_fac_P/YeiP"/>
</dbReference>
<dbReference type="InterPro" id="IPR013185">
    <property type="entry name" value="Transl_elong_KOW-like"/>
</dbReference>
<dbReference type="InterPro" id="IPR001059">
    <property type="entry name" value="Transl_elong_P/YeiP_cen"/>
</dbReference>
<dbReference type="InterPro" id="IPR013852">
    <property type="entry name" value="Transl_elong_P/YeiP_CS"/>
</dbReference>
<dbReference type="InterPro" id="IPR011768">
    <property type="entry name" value="Transl_elongation_fac_P"/>
</dbReference>
<dbReference type="InterPro" id="IPR008991">
    <property type="entry name" value="Translation_prot_SH3-like_sf"/>
</dbReference>
<dbReference type="NCBIfam" id="TIGR00038">
    <property type="entry name" value="efp"/>
    <property type="match status" value="1"/>
</dbReference>
<dbReference type="NCBIfam" id="NF001810">
    <property type="entry name" value="PRK00529.1"/>
    <property type="match status" value="1"/>
</dbReference>
<dbReference type="PANTHER" id="PTHR30053">
    <property type="entry name" value="ELONGATION FACTOR P"/>
    <property type="match status" value="1"/>
</dbReference>
<dbReference type="PANTHER" id="PTHR30053:SF12">
    <property type="entry name" value="ELONGATION FACTOR P (EF-P) FAMILY PROTEIN"/>
    <property type="match status" value="1"/>
</dbReference>
<dbReference type="Pfam" id="PF01132">
    <property type="entry name" value="EFP"/>
    <property type="match status" value="1"/>
</dbReference>
<dbReference type="Pfam" id="PF08207">
    <property type="entry name" value="EFP_N"/>
    <property type="match status" value="1"/>
</dbReference>
<dbReference type="Pfam" id="PF09285">
    <property type="entry name" value="Elong-fact-P_C"/>
    <property type="match status" value="1"/>
</dbReference>
<dbReference type="PIRSF" id="PIRSF005901">
    <property type="entry name" value="EF-P"/>
    <property type="match status" value="1"/>
</dbReference>
<dbReference type="SMART" id="SM01185">
    <property type="entry name" value="EFP"/>
    <property type="match status" value="1"/>
</dbReference>
<dbReference type="SMART" id="SM00841">
    <property type="entry name" value="Elong-fact-P_C"/>
    <property type="match status" value="1"/>
</dbReference>
<dbReference type="SUPFAM" id="SSF50249">
    <property type="entry name" value="Nucleic acid-binding proteins"/>
    <property type="match status" value="2"/>
</dbReference>
<dbReference type="SUPFAM" id="SSF50104">
    <property type="entry name" value="Translation proteins SH3-like domain"/>
    <property type="match status" value="1"/>
</dbReference>
<dbReference type="PROSITE" id="PS01275">
    <property type="entry name" value="EFP"/>
    <property type="match status" value="1"/>
</dbReference>
<sequence>MINVNEFKPGITFEDEGNIYVVLTAQHSKQGRGQANVKAKVKNLRTGSTTLKSYTGGDKVQKAHIEKKPMDYLYNDGSNIILMDQESFEQIEIDVKKVEWELNFLTEGMKILVRQYQNEILDIEIPINIELKVINAPDAVKGNTTTNPQKKVIVETGYELEVPMFIKEGETIIVSSETGKYGGKSSK</sequence>
<evidence type="ECO:0000255" key="1">
    <source>
        <dbReference type="HAMAP-Rule" id="MF_00141"/>
    </source>
</evidence>
<organism>
    <name type="scientific">Mycoplasmopsis pulmonis (strain UAB CTIP)</name>
    <name type="common">Mycoplasma pulmonis</name>
    <dbReference type="NCBI Taxonomy" id="272635"/>
    <lineage>
        <taxon>Bacteria</taxon>
        <taxon>Bacillati</taxon>
        <taxon>Mycoplasmatota</taxon>
        <taxon>Mycoplasmoidales</taxon>
        <taxon>Metamycoplasmataceae</taxon>
        <taxon>Mycoplasmopsis</taxon>
    </lineage>
</organism>
<name>EFP_MYCPU</name>
<reference key="1">
    <citation type="journal article" date="2001" name="Nucleic Acids Res.">
        <title>The complete genome sequence of the murine respiratory pathogen Mycoplasma pulmonis.</title>
        <authorList>
            <person name="Chambaud I."/>
            <person name="Heilig R."/>
            <person name="Ferris S."/>
            <person name="Barbe V."/>
            <person name="Samson D."/>
            <person name="Galisson F."/>
            <person name="Moszer I."/>
            <person name="Dybvig K."/>
            <person name="Wroblewski H."/>
            <person name="Viari A."/>
            <person name="Rocha E.P.C."/>
            <person name="Blanchard A."/>
        </authorList>
    </citation>
    <scope>NUCLEOTIDE SEQUENCE [LARGE SCALE GENOMIC DNA]</scope>
    <source>
        <strain>UAB CTIP</strain>
    </source>
</reference>
<comment type="function">
    <text evidence="1">Involved in peptide bond synthesis. Stimulates efficient translation and peptide-bond synthesis on native or reconstituted 70S ribosomes in vitro. Probably functions indirectly by altering the affinity of the ribosome for aminoacyl-tRNA, thus increasing their reactivity as acceptors for peptidyl transferase.</text>
</comment>
<comment type="pathway">
    <text evidence="1">Protein biosynthesis; polypeptide chain elongation.</text>
</comment>
<comment type="subcellular location">
    <subcellularLocation>
        <location evidence="1">Cytoplasm</location>
    </subcellularLocation>
</comment>
<comment type="similarity">
    <text evidence="1">Belongs to the elongation factor P family.</text>
</comment>
<protein>
    <recommendedName>
        <fullName evidence="1">Elongation factor P</fullName>
        <shortName evidence="1">EF-P</shortName>
    </recommendedName>
</protein>
<keyword id="KW-0963">Cytoplasm</keyword>
<keyword id="KW-0251">Elongation factor</keyword>
<keyword id="KW-0648">Protein biosynthesis</keyword>
<keyword id="KW-1185">Reference proteome</keyword>
<gene>
    <name evidence="1" type="primary">efp</name>
    <name type="ordered locus">MYPU_5130</name>
</gene>